<accession>Q5LT54</accession>
<gene>
    <name evidence="1" type="primary">folD2</name>
    <name type="ordered locus">SPO1560</name>
</gene>
<protein>
    <recommendedName>
        <fullName evidence="1">Bifunctional protein FolD 2</fullName>
    </recommendedName>
    <domain>
        <recommendedName>
            <fullName evidence="1">Methylenetetrahydrofolate dehydrogenase</fullName>
            <ecNumber evidence="1">1.5.1.5</ecNumber>
        </recommendedName>
    </domain>
    <domain>
        <recommendedName>
            <fullName evidence="1">Methenyltetrahydrofolate cyclohydrolase</fullName>
            <ecNumber evidence="1">3.5.4.9</ecNumber>
        </recommendedName>
    </domain>
</protein>
<organism>
    <name type="scientific">Ruegeria pomeroyi (strain ATCC 700808 / DSM 15171 / DSS-3)</name>
    <name type="common">Silicibacter pomeroyi</name>
    <dbReference type="NCBI Taxonomy" id="246200"/>
    <lineage>
        <taxon>Bacteria</taxon>
        <taxon>Pseudomonadati</taxon>
        <taxon>Pseudomonadota</taxon>
        <taxon>Alphaproteobacteria</taxon>
        <taxon>Rhodobacterales</taxon>
        <taxon>Roseobacteraceae</taxon>
        <taxon>Ruegeria</taxon>
    </lineage>
</organism>
<dbReference type="EC" id="1.5.1.5" evidence="1"/>
<dbReference type="EC" id="3.5.4.9" evidence="1"/>
<dbReference type="EMBL" id="CP000031">
    <property type="protein sequence ID" value="AAV94847.1"/>
    <property type="molecule type" value="Genomic_DNA"/>
</dbReference>
<dbReference type="RefSeq" id="WP_011047297.1">
    <property type="nucleotide sequence ID" value="NC_003911.12"/>
</dbReference>
<dbReference type="SMR" id="Q5LT54"/>
<dbReference type="STRING" id="246200.SPO1560"/>
<dbReference type="PaxDb" id="246200-SPO1560"/>
<dbReference type="KEGG" id="sil:SPO1560"/>
<dbReference type="eggNOG" id="COG0190">
    <property type="taxonomic scope" value="Bacteria"/>
</dbReference>
<dbReference type="HOGENOM" id="CLU_034045_2_1_5"/>
<dbReference type="OrthoDB" id="9803580at2"/>
<dbReference type="UniPathway" id="UPA00193"/>
<dbReference type="Proteomes" id="UP000001023">
    <property type="component" value="Chromosome"/>
</dbReference>
<dbReference type="GO" id="GO:0005829">
    <property type="term" value="C:cytosol"/>
    <property type="evidence" value="ECO:0007669"/>
    <property type="project" value="TreeGrafter"/>
</dbReference>
<dbReference type="GO" id="GO:0004477">
    <property type="term" value="F:methenyltetrahydrofolate cyclohydrolase activity"/>
    <property type="evidence" value="ECO:0007669"/>
    <property type="project" value="UniProtKB-UniRule"/>
</dbReference>
<dbReference type="GO" id="GO:0004488">
    <property type="term" value="F:methylenetetrahydrofolate dehydrogenase (NADP+) activity"/>
    <property type="evidence" value="ECO:0007669"/>
    <property type="project" value="UniProtKB-UniRule"/>
</dbReference>
<dbReference type="GO" id="GO:0000105">
    <property type="term" value="P:L-histidine biosynthetic process"/>
    <property type="evidence" value="ECO:0007669"/>
    <property type="project" value="UniProtKB-KW"/>
</dbReference>
<dbReference type="GO" id="GO:0009086">
    <property type="term" value="P:methionine biosynthetic process"/>
    <property type="evidence" value="ECO:0007669"/>
    <property type="project" value="UniProtKB-KW"/>
</dbReference>
<dbReference type="GO" id="GO:0006164">
    <property type="term" value="P:purine nucleotide biosynthetic process"/>
    <property type="evidence" value="ECO:0007669"/>
    <property type="project" value="UniProtKB-KW"/>
</dbReference>
<dbReference type="GO" id="GO:0035999">
    <property type="term" value="P:tetrahydrofolate interconversion"/>
    <property type="evidence" value="ECO:0007669"/>
    <property type="project" value="UniProtKB-UniRule"/>
</dbReference>
<dbReference type="CDD" id="cd01080">
    <property type="entry name" value="NAD_bind_m-THF_DH_Cyclohyd"/>
    <property type="match status" value="1"/>
</dbReference>
<dbReference type="FunFam" id="3.40.50.720:FF:000006">
    <property type="entry name" value="Bifunctional protein FolD"/>
    <property type="match status" value="1"/>
</dbReference>
<dbReference type="Gene3D" id="3.40.50.10860">
    <property type="entry name" value="Leucine Dehydrogenase, chain A, domain 1"/>
    <property type="match status" value="1"/>
</dbReference>
<dbReference type="Gene3D" id="3.40.50.720">
    <property type="entry name" value="NAD(P)-binding Rossmann-like Domain"/>
    <property type="match status" value="1"/>
</dbReference>
<dbReference type="HAMAP" id="MF_01576">
    <property type="entry name" value="THF_DHG_CYH"/>
    <property type="match status" value="1"/>
</dbReference>
<dbReference type="InterPro" id="IPR046346">
    <property type="entry name" value="Aminoacid_DH-like_N_sf"/>
</dbReference>
<dbReference type="InterPro" id="IPR036291">
    <property type="entry name" value="NAD(P)-bd_dom_sf"/>
</dbReference>
<dbReference type="InterPro" id="IPR000672">
    <property type="entry name" value="THF_DH/CycHdrlase"/>
</dbReference>
<dbReference type="InterPro" id="IPR020630">
    <property type="entry name" value="THF_DH/CycHdrlase_cat_dom"/>
</dbReference>
<dbReference type="InterPro" id="IPR020631">
    <property type="entry name" value="THF_DH/CycHdrlase_NAD-bd_dom"/>
</dbReference>
<dbReference type="PANTHER" id="PTHR48099:SF5">
    <property type="entry name" value="C-1-TETRAHYDROFOLATE SYNTHASE, CYTOPLASMIC"/>
    <property type="match status" value="1"/>
</dbReference>
<dbReference type="PANTHER" id="PTHR48099">
    <property type="entry name" value="C-1-TETRAHYDROFOLATE SYNTHASE, CYTOPLASMIC-RELATED"/>
    <property type="match status" value="1"/>
</dbReference>
<dbReference type="Pfam" id="PF00763">
    <property type="entry name" value="THF_DHG_CYH"/>
    <property type="match status" value="1"/>
</dbReference>
<dbReference type="Pfam" id="PF02882">
    <property type="entry name" value="THF_DHG_CYH_C"/>
    <property type="match status" value="1"/>
</dbReference>
<dbReference type="PRINTS" id="PR00085">
    <property type="entry name" value="THFDHDRGNASE"/>
</dbReference>
<dbReference type="SUPFAM" id="SSF53223">
    <property type="entry name" value="Aminoacid dehydrogenase-like, N-terminal domain"/>
    <property type="match status" value="1"/>
</dbReference>
<dbReference type="SUPFAM" id="SSF51735">
    <property type="entry name" value="NAD(P)-binding Rossmann-fold domains"/>
    <property type="match status" value="1"/>
</dbReference>
<reference key="1">
    <citation type="journal article" date="2004" name="Nature">
        <title>Genome sequence of Silicibacter pomeroyi reveals adaptations to the marine environment.</title>
        <authorList>
            <person name="Moran M.A."/>
            <person name="Buchan A."/>
            <person name="Gonzalez J.M."/>
            <person name="Heidelberg J.F."/>
            <person name="Whitman W.B."/>
            <person name="Kiene R.P."/>
            <person name="Henriksen J.R."/>
            <person name="King G.M."/>
            <person name="Belas R."/>
            <person name="Fuqua C."/>
            <person name="Brinkac L.M."/>
            <person name="Lewis M."/>
            <person name="Johri S."/>
            <person name="Weaver B."/>
            <person name="Pai G."/>
            <person name="Eisen J.A."/>
            <person name="Rahe E."/>
            <person name="Sheldon W.M."/>
            <person name="Ye W."/>
            <person name="Miller T.R."/>
            <person name="Carlton J."/>
            <person name="Rasko D.A."/>
            <person name="Paulsen I.T."/>
            <person name="Ren Q."/>
            <person name="Daugherty S.C."/>
            <person name="DeBoy R.T."/>
            <person name="Dodson R.J."/>
            <person name="Durkin A.S."/>
            <person name="Madupu R."/>
            <person name="Nelson W.C."/>
            <person name="Sullivan S.A."/>
            <person name="Rosovitz M.J."/>
            <person name="Haft D.H."/>
            <person name="Selengut J."/>
            <person name="Ward N."/>
        </authorList>
    </citation>
    <scope>NUCLEOTIDE SEQUENCE [LARGE SCALE GENOMIC DNA]</scope>
    <source>
        <strain>ATCC 700808 / DSM 15171 / DSS-3</strain>
    </source>
</reference>
<reference key="2">
    <citation type="journal article" date="2014" name="Stand. Genomic Sci.">
        <title>An updated genome annotation for the model marine bacterium Ruegeria pomeroyi DSS-3.</title>
        <authorList>
            <person name="Rivers A.R."/>
            <person name="Smith C.B."/>
            <person name="Moran M.A."/>
        </authorList>
    </citation>
    <scope>GENOME REANNOTATION</scope>
    <source>
        <strain>ATCC 700808 / DSM 15171 / DSS-3</strain>
    </source>
</reference>
<name>FOLD2_RUEPO</name>
<feature type="chain" id="PRO_0000268502" description="Bifunctional protein FolD 2">
    <location>
        <begin position="1"/>
        <end position="292"/>
    </location>
</feature>
<feature type="binding site" evidence="1">
    <location>
        <begin position="166"/>
        <end position="168"/>
    </location>
    <ligand>
        <name>NADP(+)</name>
        <dbReference type="ChEBI" id="CHEBI:58349"/>
    </ligand>
</feature>
<feature type="binding site" evidence="1">
    <location>
        <position position="232"/>
    </location>
    <ligand>
        <name>NADP(+)</name>
        <dbReference type="ChEBI" id="CHEBI:58349"/>
    </ligand>
</feature>
<keyword id="KW-0028">Amino-acid biosynthesis</keyword>
<keyword id="KW-0368">Histidine biosynthesis</keyword>
<keyword id="KW-0378">Hydrolase</keyword>
<keyword id="KW-0486">Methionine biosynthesis</keyword>
<keyword id="KW-0511">Multifunctional enzyme</keyword>
<keyword id="KW-0521">NADP</keyword>
<keyword id="KW-0554">One-carbon metabolism</keyword>
<keyword id="KW-0560">Oxidoreductase</keyword>
<keyword id="KW-0658">Purine biosynthesis</keyword>
<keyword id="KW-1185">Reference proteome</keyword>
<evidence type="ECO:0000255" key="1">
    <source>
        <dbReference type="HAMAP-Rule" id="MF_01576"/>
    </source>
</evidence>
<proteinExistence type="inferred from homology"/>
<comment type="function">
    <text evidence="1">Catalyzes the oxidation of 5,10-methylenetetrahydrofolate to 5,10-methenyltetrahydrofolate and then the hydrolysis of 5,10-methenyltetrahydrofolate to 10-formyltetrahydrofolate.</text>
</comment>
<comment type="catalytic activity">
    <reaction evidence="1">
        <text>(6R)-5,10-methylene-5,6,7,8-tetrahydrofolate + NADP(+) = (6R)-5,10-methenyltetrahydrofolate + NADPH</text>
        <dbReference type="Rhea" id="RHEA:22812"/>
        <dbReference type="ChEBI" id="CHEBI:15636"/>
        <dbReference type="ChEBI" id="CHEBI:57455"/>
        <dbReference type="ChEBI" id="CHEBI:57783"/>
        <dbReference type="ChEBI" id="CHEBI:58349"/>
        <dbReference type="EC" id="1.5.1.5"/>
    </reaction>
</comment>
<comment type="catalytic activity">
    <reaction evidence="1">
        <text>(6R)-5,10-methenyltetrahydrofolate + H2O = (6R)-10-formyltetrahydrofolate + H(+)</text>
        <dbReference type="Rhea" id="RHEA:23700"/>
        <dbReference type="ChEBI" id="CHEBI:15377"/>
        <dbReference type="ChEBI" id="CHEBI:15378"/>
        <dbReference type="ChEBI" id="CHEBI:57455"/>
        <dbReference type="ChEBI" id="CHEBI:195366"/>
        <dbReference type="EC" id="3.5.4.9"/>
    </reaction>
</comment>
<comment type="pathway">
    <text evidence="1">One-carbon metabolism; tetrahydrofolate interconversion.</text>
</comment>
<comment type="subunit">
    <text evidence="1">Homodimer.</text>
</comment>
<comment type="similarity">
    <text evidence="1">Belongs to the tetrahydrofolate dehydrogenase/cyclohydrolase family.</text>
</comment>
<sequence>MSTVADTRLLPGKPVRARILSEVSAYVNQVGRIGKLVSISIGNVPEVAVYVRNQARAASAVGVPFDQQLWDRSISQEVCQSLIREMNDDPDVLGIILQRPVPDHINVRALQAAIHPLKDVEGMNPASIGNIVYNDVAMAPCTAAAAIELIRETGLSMAGLEVVMVGHSEIVGKPVAMMLMAEGATVTVCHHMTRSDAMHSRRADVVVVAVGKAHLIGPDMIKPGAVVIDIGINHVPGPDGPVVVGDVQTDAVKDVAGWITPVPGGVGLVTVAILLRNAIRAHQQQRAAGWIH</sequence>